<keyword id="KW-0150">Chloroplast</keyword>
<keyword id="KW-0240">DNA-directed RNA polymerase</keyword>
<keyword id="KW-0548">Nucleotidyltransferase</keyword>
<keyword id="KW-0934">Plastid</keyword>
<keyword id="KW-0804">Transcription</keyword>
<keyword id="KW-0808">Transferase</keyword>
<reference key="1">
    <citation type="journal article" date="2007" name="Mol. Biol. Evol.">
        <title>Gene relocations within chloroplast genomes of Jasminum and Menodora (Oleaceae) are due to multiple, overlapping inversions.</title>
        <authorList>
            <person name="Lee H.-L."/>
            <person name="Jansen R.K."/>
            <person name="Chumley T.W."/>
            <person name="Kim K.-J."/>
        </authorList>
    </citation>
    <scope>NUCLEOTIDE SEQUENCE [LARGE SCALE GENOMIC DNA]</scope>
</reference>
<evidence type="ECO:0000255" key="1">
    <source>
        <dbReference type="HAMAP-Rule" id="MF_01321"/>
    </source>
</evidence>
<dbReference type="EC" id="2.7.7.6" evidence="1"/>
<dbReference type="EMBL" id="DQ673255">
    <property type="protein sequence ID" value="ABG74620.1"/>
    <property type="molecule type" value="Genomic_DNA"/>
</dbReference>
<dbReference type="RefSeq" id="YP_778482.1">
    <property type="nucleotide sequence ID" value="NC_008407.1"/>
</dbReference>
<dbReference type="SMR" id="Q06RD9"/>
<dbReference type="GeneID" id="4319744"/>
<dbReference type="GO" id="GO:0009507">
    <property type="term" value="C:chloroplast"/>
    <property type="evidence" value="ECO:0007669"/>
    <property type="project" value="UniProtKB-SubCell"/>
</dbReference>
<dbReference type="GO" id="GO:0000428">
    <property type="term" value="C:DNA-directed RNA polymerase complex"/>
    <property type="evidence" value="ECO:0007669"/>
    <property type="project" value="UniProtKB-KW"/>
</dbReference>
<dbReference type="GO" id="GO:0005739">
    <property type="term" value="C:mitochondrion"/>
    <property type="evidence" value="ECO:0007669"/>
    <property type="project" value="GOC"/>
</dbReference>
<dbReference type="GO" id="GO:0003677">
    <property type="term" value="F:DNA binding"/>
    <property type="evidence" value="ECO:0007669"/>
    <property type="project" value="UniProtKB-UniRule"/>
</dbReference>
<dbReference type="GO" id="GO:0003899">
    <property type="term" value="F:DNA-directed RNA polymerase activity"/>
    <property type="evidence" value="ECO:0007669"/>
    <property type="project" value="UniProtKB-UniRule"/>
</dbReference>
<dbReference type="GO" id="GO:0032549">
    <property type="term" value="F:ribonucleoside binding"/>
    <property type="evidence" value="ECO:0007669"/>
    <property type="project" value="InterPro"/>
</dbReference>
<dbReference type="GO" id="GO:0006351">
    <property type="term" value="P:DNA-templated transcription"/>
    <property type="evidence" value="ECO:0007669"/>
    <property type="project" value="UniProtKB-UniRule"/>
</dbReference>
<dbReference type="CDD" id="cd00653">
    <property type="entry name" value="RNA_pol_B_RPB2"/>
    <property type="match status" value="1"/>
</dbReference>
<dbReference type="FunFam" id="3.90.1110.10:FF:000009">
    <property type="entry name" value="DNA-directed RNA polymerase subunit beta"/>
    <property type="match status" value="1"/>
</dbReference>
<dbReference type="Gene3D" id="2.40.50.100">
    <property type="match status" value="1"/>
</dbReference>
<dbReference type="Gene3D" id="2.40.50.150">
    <property type="match status" value="1"/>
</dbReference>
<dbReference type="Gene3D" id="3.90.1100.10">
    <property type="match status" value="1"/>
</dbReference>
<dbReference type="Gene3D" id="2.30.150.10">
    <property type="entry name" value="DNA-directed RNA polymerase, beta subunit, external 1 domain"/>
    <property type="match status" value="1"/>
</dbReference>
<dbReference type="Gene3D" id="2.40.270.10">
    <property type="entry name" value="DNA-directed RNA polymerase, subunit 2, domain 6"/>
    <property type="match status" value="2"/>
</dbReference>
<dbReference type="Gene3D" id="3.90.1800.10">
    <property type="entry name" value="RNA polymerase alpha subunit dimerisation domain"/>
    <property type="match status" value="1"/>
</dbReference>
<dbReference type="Gene3D" id="3.90.1110.10">
    <property type="entry name" value="RNA polymerase Rpb2, domain 2"/>
    <property type="match status" value="1"/>
</dbReference>
<dbReference type="HAMAP" id="MF_01321">
    <property type="entry name" value="RNApol_bact_RpoB"/>
    <property type="match status" value="1"/>
</dbReference>
<dbReference type="InterPro" id="IPR042107">
    <property type="entry name" value="DNA-dir_RNA_pol_bsu_ext_1_sf"/>
</dbReference>
<dbReference type="InterPro" id="IPR015712">
    <property type="entry name" value="DNA-dir_RNA_pol_su2"/>
</dbReference>
<dbReference type="InterPro" id="IPR007120">
    <property type="entry name" value="DNA-dir_RNAP_su2_dom"/>
</dbReference>
<dbReference type="InterPro" id="IPR037033">
    <property type="entry name" value="DNA-dir_RNAP_su2_hyb_sf"/>
</dbReference>
<dbReference type="InterPro" id="IPR010243">
    <property type="entry name" value="RNA_pol_bsu_bac"/>
</dbReference>
<dbReference type="InterPro" id="IPR007121">
    <property type="entry name" value="RNA_pol_bsu_CS"/>
</dbReference>
<dbReference type="InterPro" id="IPR007642">
    <property type="entry name" value="RNA_pol_Rpb2_2"/>
</dbReference>
<dbReference type="InterPro" id="IPR037034">
    <property type="entry name" value="RNA_pol_Rpb2_2_sf"/>
</dbReference>
<dbReference type="InterPro" id="IPR007645">
    <property type="entry name" value="RNA_pol_Rpb2_3"/>
</dbReference>
<dbReference type="InterPro" id="IPR007641">
    <property type="entry name" value="RNA_pol_Rpb2_7"/>
</dbReference>
<dbReference type="InterPro" id="IPR014724">
    <property type="entry name" value="RNA_pol_RPB2_OB-fold"/>
</dbReference>
<dbReference type="NCBIfam" id="NF001616">
    <property type="entry name" value="PRK00405.1"/>
    <property type="match status" value="1"/>
</dbReference>
<dbReference type="PANTHER" id="PTHR20856">
    <property type="entry name" value="DNA-DIRECTED RNA POLYMERASE I SUBUNIT 2"/>
    <property type="match status" value="1"/>
</dbReference>
<dbReference type="Pfam" id="PF04561">
    <property type="entry name" value="RNA_pol_Rpb2_2"/>
    <property type="match status" value="1"/>
</dbReference>
<dbReference type="Pfam" id="PF04565">
    <property type="entry name" value="RNA_pol_Rpb2_3"/>
    <property type="match status" value="1"/>
</dbReference>
<dbReference type="Pfam" id="PF00562">
    <property type="entry name" value="RNA_pol_Rpb2_6"/>
    <property type="match status" value="1"/>
</dbReference>
<dbReference type="Pfam" id="PF04560">
    <property type="entry name" value="RNA_pol_Rpb2_7"/>
    <property type="match status" value="1"/>
</dbReference>
<dbReference type="SUPFAM" id="SSF64484">
    <property type="entry name" value="beta and beta-prime subunits of DNA dependent RNA-polymerase"/>
    <property type="match status" value="1"/>
</dbReference>
<dbReference type="PROSITE" id="PS01166">
    <property type="entry name" value="RNA_POL_BETA"/>
    <property type="match status" value="1"/>
</dbReference>
<sequence length="1064" mass="120285">MLGDGNEGMSTIPGLNQIQFEGFCRFIDQGLTEELSKFPKIEDTDQEIEFQLFMERYQLVEPLRKERDAVYESLTYSSEFYVSAGLIWKTSRDMQEQTILIGNIPLMNSLGTSIVKGIYRIVINQILQSPGIYYRSELDHNEISVYTGTIISDWGGRSELEIDRKARIWARVSRKQKISILVLSSAMGSNLKEILDNVFYPEIFLSFLKDKERKKIGSKENAILEFYQQFACVGGDPVFSESLCKELQTKFFQQRCELGRIGRRNMNRRLNLDIPQNNTFLLPRDILAAADHLIEQKFGMGTLDDMNHLKNKRIRSVADLLQDQLGLALVRLEDEVRETICGPIRHKWRTTPHPQNLVTSTPLTTTYESFFGSHPLSQVLDQTNPLTQIVHGRKWSYLDPGGLTGRTASFRIRDIHPSHYGRICPIDTSEGINVGLIGSLAIHAKIGHWGSLESPFYEISERSTGVQMLYLSPGRDEYYTVAAGNSLALNQDIQEEEVVPARYRQEFLTIAWEQVHFRSILPFQYFSIGASLIPFIEHNDANRALMSSNMQRQAVPLSRPEKCIVGTGLERQVALDSGALAIAEREGKIVSTDTEKILFSGNGDTLSIPLVMYQSSNKNTCMHQKPQVQRGKCIKKGQILADGAATVGGELALGKNVLVAYMPWEGYNSEDAVLISERLVYEDIYTSFHIRKYEIQTAGTERITNEIPHLEAHLLRNLDKNGIVMLGSWVETGAILVGKLTPEVVKESPANRLVYDIVGIQVSTSKDTCLKLPIGGRGRVIDVRWIQKRGDNDNPETIRIYISQKREIKVGDKVAGRHGNKGIISKILPRQDMPYLQDGRPVDMVFNPLGVPSRMNVGQIFECSLGLAGGLLDRHYRIVPFDERYEQEASRKLVFSELYEASKQTTNPWVFEPEYPGKSRIFDGRSGNPFEQPILIGKPYILKLIHQVDDKIHGRSVGNYTHITQQPLRGRAKGGGQRVGEMEVWALEGFGVAHILQEMLTYKSDHIRARQKIPGTTMIGGTIPNPEDAPESFRVLVRELRSLALELNHFLVSEKNFQINRKEA</sequence>
<organism>
    <name type="scientific">Jasminum nudiflorum</name>
    <name type="common">Winter jasmine</name>
    <dbReference type="NCBI Taxonomy" id="126431"/>
    <lineage>
        <taxon>Eukaryota</taxon>
        <taxon>Viridiplantae</taxon>
        <taxon>Streptophyta</taxon>
        <taxon>Embryophyta</taxon>
        <taxon>Tracheophyta</taxon>
        <taxon>Spermatophyta</taxon>
        <taxon>Magnoliopsida</taxon>
        <taxon>eudicotyledons</taxon>
        <taxon>Gunneridae</taxon>
        <taxon>Pentapetalae</taxon>
        <taxon>asterids</taxon>
        <taxon>lamiids</taxon>
        <taxon>Lamiales</taxon>
        <taxon>Oleaceae</taxon>
        <taxon>Jasmineae</taxon>
        <taxon>Jasminum</taxon>
    </lineage>
</organism>
<geneLocation type="chloroplast"/>
<proteinExistence type="inferred from homology"/>
<gene>
    <name evidence="1" type="primary">rpoB</name>
    <name type="ORF">JNC0253</name>
</gene>
<name>RPOB_JASNU</name>
<protein>
    <recommendedName>
        <fullName evidence="1">DNA-directed RNA polymerase subunit beta</fullName>
        <ecNumber evidence="1">2.7.7.6</ecNumber>
    </recommendedName>
    <alternativeName>
        <fullName evidence="1">PEP</fullName>
    </alternativeName>
    <alternativeName>
        <fullName evidence="1">Plastid-encoded RNA polymerase subunit beta</fullName>
        <shortName evidence="1">RNA polymerase subunit beta</shortName>
    </alternativeName>
</protein>
<feature type="chain" id="PRO_0000276590" description="DNA-directed RNA polymerase subunit beta">
    <location>
        <begin position="1"/>
        <end position="1064"/>
    </location>
</feature>
<accession>Q06RD9</accession>
<comment type="function">
    <text evidence="1">DNA-dependent RNA polymerase catalyzes the transcription of DNA into RNA using the four ribonucleoside triphosphates as substrates.</text>
</comment>
<comment type="catalytic activity">
    <reaction evidence="1">
        <text>RNA(n) + a ribonucleoside 5'-triphosphate = RNA(n+1) + diphosphate</text>
        <dbReference type="Rhea" id="RHEA:21248"/>
        <dbReference type="Rhea" id="RHEA-COMP:14527"/>
        <dbReference type="Rhea" id="RHEA-COMP:17342"/>
        <dbReference type="ChEBI" id="CHEBI:33019"/>
        <dbReference type="ChEBI" id="CHEBI:61557"/>
        <dbReference type="ChEBI" id="CHEBI:140395"/>
        <dbReference type="EC" id="2.7.7.6"/>
    </reaction>
</comment>
<comment type="subunit">
    <text evidence="1">In plastids the minimal PEP RNA polymerase catalytic core is composed of four subunits: alpha, beta, beta', and beta''. When a (nuclear-encoded) sigma factor is associated with the core the holoenzyme is formed, which can initiate transcription.</text>
</comment>
<comment type="subcellular location">
    <subcellularLocation>
        <location>Plastid</location>
        <location>Chloroplast</location>
    </subcellularLocation>
</comment>
<comment type="similarity">
    <text evidence="1">Belongs to the RNA polymerase beta chain family.</text>
</comment>